<organismHost>
    <name type="scientific">Homo sapiens</name>
    <name type="common">Human</name>
    <dbReference type="NCBI Taxonomy" id="9606"/>
</organismHost>
<feature type="chain" id="PRO_0000221921" description="Uncharacterized protein F-121">
    <location>
        <begin position="1"/>
        <end position="121"/>
    </location>
</feature>
<feature type="region of interest" description="Disordered" evidence="1">
    <location>
        <begin position="12"/>
        <end position="63"/>
    </location>
</feature>
<feature type="region of interest" description="Disordered" evidence="1">
    <location>
        <begin position="101"/>
        <end position="121"/>
    </location>
</feature>
<feature type="compositionally biased region" description="Low complexity" evidence="1">
    <location>
        <begin position="12"/>
        <end position="24"/>
    </location>
</feature>
<feature type="compositionally biased region" description="Basic residues" evidence="1">
    <location>
        <begin position="26"/>
        <end position="35"/>
    </location>
</feature>
<feature type="compositionally biased region" description="Polar residues" evidence="1">
    <location>
        <begin position="40"/>
        <end position="49"/>
    </location>
</feature>
<feature type="compositionally biased region" description="Basic and acidic residues" evidence="1">
    <location>
        <begin position="112"/>
        <end position="121"/>
    </location>
</feature>
<evidence type="ECO:0000256" key="1">
    <source>
        <dbReference type="SAM" id="MobiDB-lite"/>
    </source>
</evidence>
<keyword id="KW-1185">Reference proteome</keyword>
<accession>P03294</accession>
<name>Y121_ADE02</name>
<dbReference type="EMBL" id="J01917">
    <property type="status" value="NOT_ANNOTATED_CDS"/>
    <property type="molecule type" value="Genomic_DNA"/>
</dbReference>
<dbReference type="PIR" id="H92351">
    <property type="entry name" value="A03866"/>
</dbReference>
<dbReference type="Proteomes" id="UP000008167">
    <property type="component" value="Segment"/>
</dbReference>
<protein>
    <recommendedName>
        <fullName>Uncharacterized protein F-121</fullName>
    </recommendedName>
</protein>
<organism>
    <name type="scientific">Human adenovirus C serotype 2</name>
    <name type="common">HAdV-2</name>
    <name type="synonym">Human adenovirus 2</name>
    <dbReference type="NCBI Taxonomy" id="10515"/>
    <lineage>
        <taxon>Viruses</taxon>
        <taxon>Varidnaviria</taxon>
        <taxon>Bamfordvirae</taxon>
        <taxon>Preplasmiviricota</taxon>
        <taxon>Tectiliviricetes</taxon>
        <taxon>Rowavirales</taxon>
        <taxon>Adenoviridae</taxon>
        <taxon>Mastadenovirus</taxon>
        <taxon>Human mastadenovirus C</taxon>
    </lineage>
</organism>
<sequence length="121" mass="12756">MSAAALALAAAEEGGASAAAPDASGKSKKGARPCFRRNLQAGSCMTGRQTPVRRSPAGPRLEPGVLRLNPWKITLRLQGASHLMLSLSSLTAYAARGQWPKKLAQQPPRLEGSQKERSPVV</sequence>
<reference key="1">
    <citation type="journal article" date="1982" name="J. Biol. Chem.">
        <title>Nucleotide sequences from the adenovirus-2 genome.</title>
        <authorList>
            <person name="Gingeras T.R."/>
            <person name="Sciaky D."/>
            <person name="Gelinas R.E."/>
            <person name="Bing-Dong J."/>
            <person name="Yen C.E."/>
            <person name="Kelly M.M."/>
            <person name="Bullock P.A."/>
            <person name="Parsons B.L."/>
            <person name="O'Neill K.E."/>
            <person name="Roberts R.J."/>
        </authorList>
    </citation>
    <scope>NUCLEOTIDE SEQUENCE [GENOMIC DNA]</scope>
</reference>
<reference key="2">
    <citation type="journal article" date="1982" name="J. Biol. Chem.">
        <title>DNA sequence analysis of the region encoding the terminal protein and the hypothetical N-gene product of adenovirus type 2.</title>
        <authorList>
            <person name="Alestroem P."/>
            <person name="Akusjaervi G."/>
            <person name="Pettersson M."/>
            <person name="Pettersson U."/>
        </authorList>
    </citation>
    <scope>NUCLEOTIDE SEQUENCE [GENOMIC DNA]</scope>
</reference>
<proteinExistence type="predicted"/>